<name>HEM6_PROMA</name>
<gene>
    <name evidence="1" type="primary">hemF</name>
    <name type="ordered locus">Pro_1737</name>
</gene>
<comment type="function">
    <text evidence="1">Involved in the heme and chlorophyll biosynthesis. Catalyzes the aerobic oxidative decarboxylation of propionate groups of rings A and B of coproporphyrinogen-III to yield the vinyl groups in protoporphyrinogen-IX.</text>
</comment>
<comment type="catalytic activity">
    <reaction evidence="1">
        <text>coproporphyrinogen III + O2 + 2 H(+) = protoporphyrinogen IX + 2 CO2 + 2 H2O</text>
        <dbReference type="Rhea" id="RHEA:18257"/>
        <dbReference type="ChEBI" id="CHEBI:15377"/>
        <dbReference type="ChEBI" id="CHEBI:15378"/>
        <dbReference type="ChEBI" id="CHEBI:15379"/>
        <dbReference type="ChEBI" id="CHEBI:16526"/>
        <dbReference type="ChEBI" id="CHEBI:57307"/>
        <dbReference type="ChEBI" id="CHEBI:57309"/>
        <dbReference type="EC" id="1.3.3.3"/>
    </reaction>
</comment>
<comment type="cofactor">
    <cofactor evidence="1">
        <name>a divalent metal cation</name>
        <dbReference type="ChEBI" id="CHEBI:60240"/>
    </cofactor>
</comment>
<comment type="pathway">
    <text evidence="1">Porphyrin-containing compound metabolism; protoporphyrin-IX biosynthesis; protoporphyrinogen-IX from coproporphyrinogen-III (O2 route): step 1/1.</text>
</comment>
<comment type="subunit">
    <text evidence="1">Homodimer.</text>
</comment>
<comment type="subcellular location">
    <subcellularLocation>
        <location evidence="1">Cytoplasm</location>
    </subcellularLocation>
</comment>
<comment type="similarity">
    <text evidence="1">Belongs to the aerobic coproporphyrinogen-III oxidase family.</text>
</comment>
<organism>
    <name type="scientific">Prochlorococcus marinus (strain SARG / CCMP1375 / SS120)</name>
    <dbReference type="NCBI Taxonomy" id="167539"/>
    <lineage>
        <taxon>Bacteria</taxon>
        <taxon>Bacillati</taxon>
        <taxon>Cyanobacteriota</taxon>
        <taxon>Cyanophyceae</taxon>
        <taxon>Synechococcales</taxon>
        <taxon>Prochlorococcaceae</taxon>
        <taxon>Prochlorococcus</taxon>
    </lineage>
</organism>
<keyword id="KW-0149">Chlorophyll biosynthesis</keyword>
<keyword id="KW-0963">Cytoplasm</keyword>
<keyword id="KW-0350">Heme biosynthesis</keyword>
<keyword id="KW-0479">Metal-binding</keyword>
<keyword id="KW-0560">Oxidoreductase</keyword>
<keyword id="KW-0627">Porphyrin biosynthesis</keyword>
<keyword id="KW-1185">Reference proteome</keyword>
<sequence>MSLSQPSTQSRVKVKSFLTGLQDDICKGLENIDGEGTFQEESWERPEGGGGRSRVMREGRIFEQGGVNFSEVHGEELPPSILNQRPEAKGHKWFATGTSMVLHPRNPYIPTVHLNYRYFEAGPVWWFGGGADLTPYYPYLKDTRHFHKIHQEACDSINPKLHKVFKPWCDEYFFLKHRNESRGVGGIFFDYQDGSGKLYKGQNPNGLSSIASKELGEYKLSWEDLFSLAKACGNAFLPSYIPIIEKRHNQTFSDRERNFQLYRRGRYVEFNLVWDRGTIFGLQTNGRTESILMSLPPLARWEYGFKAPPESRESLLTDVFTKPQEWFTDESLEEKCRPHHAVD</sequence>
<feature type="chain" id="PRO_0000109907" description="Oxygen-dependent coproporphyrinogen-III oxidase">
    <location>
        <begin position="1"/>
        <end position="343"/>
    </location>
</feature>
<feature type="region of interest" description="Important for dimerization" evidence="1">
    <location>
        <begin position="267"/>
        <end position="302"/>
    </location>
</feature>
<feature type="active site" description="Proton donor" evidence="1">
    <location>
        <position position="113"/>
    </location>
</feature>
<feature type="binding site" evidence="1">
    <location>
        <position position="99"/>
    </location>
    <ligand>
        <name>substrate</name>
    </ligand>
</feature>
<feature type="binding site" evidence="1">
    <location>
        <position position="103"/>
    </location>
    <ligand>
        <name>a divalent metal cation</name>
        <dbReference type="ChEBI" id="CHEBI:60240"/>
    </ligand>
</feature>
<feature type="binding site" evidence="1">
    <location>
        <position position="113"/>
    </location>
    <ligand>
        <name>a divalent metal cation</name>
        <dbReference type="ChEBI" id="CHEBI:60240"/>
    </ligand>
</feature>
<feature type="binding site" evidence="1">
    <location>
        <begin position="115"/>
        <end position="117"/>
    </location>
    <ligand>
        <name>substrate</name>
    </ligand>
</feature>
<feature type="binding site" evidence="1">
    <location>
        <position position="147"/>
    </location>
    <ligand>
        <name>a divalent metal cation</name>
        <dbReference type="ChEBI" id="CHEBI:60240"/>
    </ligand>
</feature>
<feature type="binding site" evidence="1">
    <location>
        <position position="177"/>
    </location>
    <ligand>
        <name>a divalent metal cation</name>
        <dbReference type="ChEBI" id="CHEBI:60240"/>
    </ligand>
</feature>
<feature type="site" description="Important for dimerization" evidence="1">
    <location>
        <position position="177"/>
    </location>
</feature>
<evidence type="ECO:0000255" key="1">
    <source>
        <dbReference type="HAMAP-Rule" id="MF_00333"/>
    </source>
</evidence>
<protein>
    <recommendedName>
        <fullName evidence="1">Oxygen-dependent coproporphyrinogen-III oxidase</fullName>
        <shortName evidence="1">CPO</shortName>
        <shortName evidence="1">Coprogen oxidase</shortName>
        <shortName evidence="1">Coproporphyrinogenase</shortName>
        <ecNumber evidence="1">1.3.3.3</ecNumber>
    </recommendedName>
</protein>
<proteinExistence type="inferred from homology"/>
<accession>Q7V9T7</accession>
<reference key="1">
    <citation type="journal article" date="2003" name="Proc. Natl. Acad. Sci. U.S.A.">
        <title>Genome sequence of the cyanobacterium Prochlorococcus marinus SS120, a nearly minimal oxyphototrophic genome.</title>
        <authorList>
            <person name="Dufresne A."/>
            <person name="Salanoubat M."/>
            <person name="Partensky F."/>
            <person name="Artiguenave F."/>
            <person name="Axmann I.M."/>
            <person name="Barbe V."/>
            <person name="Duprat S."/>
            <person name="Galperin M.Y."/>
            <person name="Koonin E.V."/>
            <person name="Le Gall F."/>
            <person name="Makarova K.S."/>
            <person name="Ostrowski M."/>
            <person name="Oztas S."/>
            <person name="Robert C."/>
            <person name="Rogozin I.B."/>
            <person name="Scanlan D.J."/>
            <person name="Tandeau de Marsac N."/>
            <person name="Weissenbach J."/>
            <person name="Wincker P."/>
            <person name="Wolf Y.I."/>
            <person name="Hess W.R."/>
        </authorList>
    </citation>
    <scope>NUCLEOTIDE SEQUENCE [LARGE SCALE GENOMIC DNA]</scope>
    <source>
        <strain>SARG / CCMP1375 / SS120</strain>
    </source>
</reference>
<dbReference type="EC" id="1.3.3.3" evidence="1"/>
<dbReference type="EMBL" id="AE017126">
    <property type="protein sequence ID" value="AAQ00781.1"/>
    <property type="molecule type" value="Genomic_DNA"/>
</dbReference>
<dbReference type="RefSeq" id="NP_876128.1">
    <property type="nucleotide sequence ID" value="NC_005042.1"/>
</dbReference>
<dbReference type="RefSeq" id="WP_011125886.1">
    <property type="nucleotide sequence ID" value="NC_005042.1"/>
</dbReference>
<dbReference type="SMR" id="Q7V9T7"/>
<dbReference type="STRING" id="167539.Pro_1737"/>
<dbReference type="EnsemblBacteria" id="AAQ00781">
    <property type="protein sequence ID" value="AAQ00781"/>
    <property type="gene ID" value="Pro_1737"/>
</dbReference>
<dbReference type="KEGG" id="pma:Pro_1737"/>
<dbReference type="PATRIC" id="fig|167539.5.peg.1832"/>
<dbReference type="eggNOG" id="COG0408">
    <property type="taxonomic scope" value="Bacteria"/>
</dbReference>
<dbReference type="HOGENOM" id="CLU_026169_0_1_3"/>
<dbReference type="OrthoDB" id="9777553at2"/>
<dbReference type="UniPathway" id="UPA00251">
    <property type="reaction ID" value="UER00322"/>
</dbReference>
<dbReference type="Proteomes" id="UP000001420">
    <property type="component" value="Chromosome"/>
</dbReference>
<dbReference type="GO" id="GO:0005737">
    <property type="term" value="C:cytoplasm"/>
    <property type="evidence" value="ECO:0007669"/>
    <property type="project" value="UniProtKB-SubCell"/>
</dbReference>
<dbReference type="GO" id="GO:0004109">
    <property type="term" value="F:coproporphyrinogen oxidase activity"/>
    <property type="evidence" value="ECO:0007669"/>
    <property type="project" value="UniProtKB-UniRule"/>
</dbReference>
<dbReference type="GO" id="GO:0046872">
    <property type="term" value="F:metal ion binding"/>
    <property type="evidence" value="ECO:0007669"/>
    <property type="project" value="UniProtKB-KW"/>
</dbReference>
<dbReference type="GO" id="GO:0042803">
    <property type="term" value="F:protein homodimerization activity"/>
    <property type="evidence" value="ECO:0000250"/>
    <property type="project" value="UniProtKB"/>
</dbReference>
<dbReference type="GO" id="GO:0015995">
    <property type="term" value="P:chlorophyll biosynthetic process"/>
    <property type="evidence" value="ECO:0007669"/>
    <property type="project" value="UniProtKB-UniRule"/>
</dbReference>
<dbReference type="GO" id="GO:0006782">
    <property type="term" value="P:protoporphyrinogen IX biosynthetic process"/>
    <property type="evidence" value="ECO:0007669"/>
    <property type="project" value="UniProtKB-UniRule"/>
</dbReference>
<dbReference type="FunFam" id="3.40.1500.10:FF:000007">
    <property type="entry name" value="Oxygen-dependent coproporphyrinogen-III oxidase"/>
    <property type="match status" value="1"/>
</dbReference>
<dbReference type="Gene3D" id="3.40.1500.10">
    <property type="entry name" value="Coproporphyrinogen III oxidase, aerobic"/>
    <property type="match status" value="1"/>
</dbReference>
<dbReference type="HAMAP" id="MF_00333">
    <property type="entry name" value="Coprogen_oxidas"/>
    <property type="match status" value="1"/>
</dbReference>
<dbReference type="InterPro" id="IPR001260">
    <property type="entry name" value="Coprogen_oxidase_aer"/>
</dbReference>
<dbReference type="InterPro" id="IPR036406">
    <property type="entry name" value="Coprogen_oxidase_aer_sf"/>
</dbReference>
<dbReference type="InterPro" id="IPR018375">
    <property type="entry name" value="Coprogen_oxidase_CS"/>
</dbReference>
<dbReference type="NCBIfam" id="NF003727">
    <property type="entry name" value="PRK05330.1"/>
    <property type="match status" value="1"/>
</dbReference>
<dbReference type="PANTHER" id="PTHR10755">
    <property type="entry name" value="COPROPORPHYRINOGEN III OXIDASE, MITOCHONDRIAL"/>
    <property type="match status" value="1"/>
</dbReference>
<dbReference type="PANTHER" id="PTHR10755:SF0">
    <property type="entry name" value="OXYGEN-DEPENDENT COPROPORPHYRINOGEN-III OXIDASE, MITOCHONDRIAL"/>
    <property type="match status" value="1"/>
</dbReference>
<dbReference type="Pfam" id="PF01218">
    <property type="entry name" value="Coprogen_oxidas"/>
    <property type="match status" value="1"/>
</dbReference>
<dbReference type="PIRSF" id="PIRSF000166">
    <property type="entry name" value="Coproporphyri_ox"/>
    <property type="match status" value="1"/>
</dbReference>
<dbReference type="PRINTS" id="PR00073">
    <property type="entry name" value="COPRGNOXDASE"/>
</dbReference>
<dbReference type="SUPFAM" id="SSF102886">
    <property type="entry name" value="Coproporphyrinogen III oxidase"/>
    <property type="match status" value="1"/>
</dbReference>
<dbReference type="PROSITE" id="PS01021">
    <property type="entry name" value="COPROGEN_OXIDASE"/>
    <property type="match status" value="1"/>
</dbReference>